<feature type="chain" id="PRO_0000345738" description="tRNA modification GTPase MnmE">
    <location>
        <begin position="1"/>
        <end position="464"/>
    </location>
</feature>
<feature type="domain" description="TrmE-type G">
    <location>
        <begin position="226"/>
        <end position="386"/>
    </location>
</feature>
<feature type="binding site" evidence="1">
    <location>
        <position position="25"/>
    </location>
    <ligand>
        <name>(6S)-5-formyl-5,6,7,8-tetrahydrofolate</name>
        <dbReference type="ChEBI" id="CHEBI:57457"/>
    </ligand>
</feature>
<feature type="binding site" evidence="1">
    <location>
        <position position="87"/>
    </location>
    <ligand>
        <name>(6S)-5-formyl-5,6,7,8-tetrahydrofolate</name>
        <dbReference type="ChEBI" id="CHEBI:57457"/>
    </ligand>
</feature>
<feature type="binding site" evidence="1">
    <location>
        <position position="130"/>
    </location>
    <ligand>
        <name>(6S)-5-formyl-5,6,7,8-tetrahydrofolate</name>
        <dbReference type="ChEBI" id="CHEBI:57457"/>
    </ligand>
</feature>
<feature type="binding site" evidence="1">
    <location>
        <begin position="236"/>
        <end position="241"/>
    </location>
    <ligand>
        <name>GTP</name>
        <dbReference type="ChEBI" id="CHEBI:37565"/>
    </ligand>
</feature>
<feature type="binding site" evidence="1">
    <location>
        <position position="236"/>
    </location>
    <ligand>
        <name>K(+)</name>
        <dbReference type="ChEBI" id="CHEBI:29103"/>
    </ligand>
</feature>
<feature type="binding site" evidence="1">
    <location>
        <position position="240"/>
    </location>
    <ligand>
        <name>Mg(2+)</name>
        <dbReference type="ChEBI" id="CHEBI:18420"/>
    </ligand>
</feature>
<feature type="binding site" evidence="1">
    <location>
        <begin position="255"/>
        <end position="261"/>
    </location>
    <ligand>
        <name>GTP</name>
        <dbReference type="ChEBI" id="CHEBI:37565"/>
    </ligand>
</feature>
<feature type="binding site" evidence="1">
    <location>
        <position position="255"/>
    </location>
    <ligand>
        <name>K(+)</name>
        <dbReference type="ChEBI" id="CHEBI:29103"/>
    </ligand>
</feature>
<feature type="binding site" evidence="1">
    <location>
        <position position="257"/>
    </location>
    <ligand>
        <name>K(+)</name>
        <dbReference type="ChEBI" id="CHEBI:29103"/>
    </ligand>
</feature>
<feature type="binding site" evidence="1">
    <location>
        <position position="260"/>
    </location>
    <ligand>
        <name>K(+)</name>
        <dbReference type="ChEBI" id="CHEBI:29103"/>
    </ligand>
</feature>
<feature type="binding site" evidence="1">
    <location>
        <position position="261"/>
    </location>
    <ligand>
        <name>Mg(2+)</name>
        <dbReference type="ChEBI" id="CHEBI:18420"/>
    </ligand>
</feature>
<feature type="binding site" evidence="1">
    <location>
        <begin position="280"/>
        <end position="283"/>
    </location>
    <ligand>
        <name>GTP</name>
        <dbReference type="ChEBI" id="CHEBI:37565"/>
    </ligand>
</feature>
<feature type="binding site" evidence="1">
    <location>
        <position position="464"/>
    </location>
    <ligand>
        <name>(6S)-5-formyl-5,6,7,8-tetrahydrofolate</name>
        <dbReference type="ChEBI" id="CHEBI:57457"/>
    </ligand>
</feature>
<comment type="function">
    <text evidence="1">Exhibits a very high intrinsic GTPase hydrolysis rate. Involved in the addition of a carboxymethylaminomethyl (cmnm) group at the wobble position (U34) of certain tRNAs, forming tRNA-cmnm(5)s(2)U34.</text>
</comment>
<comment type="cofactor">
    <cofactor evidence="1">
        <name>K(+)</name>
        <dbReference type="ChEBI" id="CHEBI:29103"/>
    </cofactor>
    <text evidence="1">Binds 1 potassium ion per subunit.</text>
</comment>
<comment type="subunit">
    <text evidence="1">Homodimer. Heterotetramer of two MnmE and two MnmG subunits.</text>
</comment>
<comment type="subcellular location">
    <subcellularLocation>
        <location evidence="1">Cytoplasm</location>
    </subcellularLocation>
</comment>
<comment type="similarity">
    <text evidence="1">Belongs to the TRAFAC class TrmE-Era-EngA-EngB-Septin-like GTPase superfamily. TrmE GTPase family.</text>
</comment>
<evidence type="ECO:0000255" key="1">
    <source>
        <dbReference type="HAMAP-Rule" id="MF_00379"/>
    </source>
</evidence>
<name>MNME_BURCH</name>
<keyword id="KW-0963">Cytoplasm</keyword>
<keyword id="KW-0342">GTP-binding</keyword>
<keyword id="KW-0378">Hydrolase</keyword>
<keyword id="KW-0460">Magnesium</keyword>
<keyword id="KW-0479">Metal-binding</keyword>
<keyword id="KW-0547">Nucleotide-binding</keyword>
<keyword id="KW-0630">Potassium</keyword>
<keyword id="KW-0819">tRNA processing</keyword>
<accession>A0KBN1</accession>
<sequence>MLATDSDPIVAIATAAGRGGIGVVRVSFGRGGEAAALPLIDALCGQKLAPRHASYVPFLDAHGAPLDRGIALYFPAPHSYTGEHVLELQGHGGPIVMQLLLQRCLDAGRGFGLRLAEPGEFTRRAFLNDKLDLAQAEAVADLIEASTEAAARSAGRSLDGAFSRQIHALVDDVITLRMLVEATLDFPEEEIDFLEAADARGKLAKIRAQLAHVLGDARQGALLREGLSVVLAGQPNVGKSSLLNALAGAELAIVTPIAGTTRDKVAQTIQVEGIPLHIIDTAGLRETEDEVERIGIARTWSEIERADVVLHLLDSRTGMTADDETIAARFPAGVPVVRVLNKTDLTGVPACVEHPAAEGDLTEVHLSAKRGDGIDMLRAELLRIAGWQAGAEGVYLARERHLIALRAAQEHLAQAANHAEQRAQSLDLFAEELRLAQEQLNAITGEFTSDDLLGVIFSRFCIGK</sequence>
<proteinExistence type="inferred from homology"/>
<organism>
    <name type="scientific">Burkholderia cenocepacia (strain HI2424)</name>
    <dbReference type="NCBI Taxonomy" id="331272"/>
    <lineage>
        <taxon>Bacteria</taxon>
        <taxon>Pseudomonadati</taxon>
        <taxon>Pseudomonadota</taxon>
        <taxon>Betaproteobacteria</taxon>
        <taxon>Burkholderiales</taxon>
        <taxon>Burkholderiaceae</taxon>
        <taxon>Burkholderia</taxon>
        <taxon>Burkholderia cepacia complex</taxon>
    </lineage>
</organism>
<gene>
    <name evidence="1" type="primary">mnmE</name>
    <name evidence="1" type="synonym">trmE</name>
    <name type="ordered locus">Bcen2424_3161</name>
</gene>
<protein>
    <recommendedName>
        <fullName evidence="1">tRNA modification GTPase MnmE</fullName>
        <ecNumber evidence="1">3.6.-.-</ecNumber>
    </recommendedName>
</protein>
<dbReference type="EC" id="3.6.-.-" evidence="1"/>
<dbReference type="EMBL" id="CP000458">
    <property type="protein sequence ID" value="ABK09908.1"/>
    <property type="molecule type" value="Genomic_DNA"/>
</dbReference>
<dbReference type="RefSeq" id="WP_011546512.1">
    <property type="nucleotide sequence ID" value="NC_008542.1"/>
</dbReference>
<dbReference type="SMR" id="A0KBN1"/>
<dbReference type="KEGG" id="bch:Bcen2424_3161"/>
<dbReference type="HOGENOM" id="CLU_019624_4_1_4"/>
<dbReference type="GO" id="GO:0005829">
    <property type="term" value="C:cytosol"/>
    <property type="evidence" value="ECO:0007669"/>
    <property type="project" value="TreeGrafter"/>
</dbReference>
<dbReference type="GO" id="GO:0005525">
    <property type="term" value="F:GTP binding"/>
    <property type="evidence" value="ECO:0007669"/>
    <property type="project" value="UniProtKB-UniRule"/>
</dbReference>
<dbReference type="GO" id="GO:0003924">
    <property type="term" value="F:GTPase activity"/>
    <property type="evidence" value="ECO:0007669"/>
    <property type="project" value="UniProtKB-UniRule"/>
</dbReference>
<dbReference type="GO" id="GO:0046872">
    <property type="term" value="F:metal ion binding"/>
    <property type="evidence" value="ECO:0007669"/>
    <property type="project" value="UniProtKB-KW"/>
</dbReference>
<dbReference type="GO" id="GO:0030488">
    <property type="term" value="P:tRNA methylation"/>
    <property type="evidence" value="ECO:0007669"/>
    <property type="project" value="TreeGrafter"/>
</dbReference>
<dbReference type="GO" id="GO:0002098">
    <property type="term" value="P:tRNA wobble uridine modification"/>
    <property type="evidence" value="ECO:0007669"/>
    <property type="project" value="TreeGrafter"/>
</dbReference>
<dbReference type="CDD" id="cd04164">
    <property type="entry name" value="trmE"/>
    <property type="match status" value="1"/>
</dbReference>
<dbReference type="CDD" id="cd14858">
    <property type="entry name" value="TrmE_N"/>
    <property type="match status" value="1"/>
</dbReference>
<dbReference type="Gene3D" id="3.40.50.300">
    <property type="entry name" value="P-loop containing nucleotide triphosphate hydrolases"/>
    <property type="match status" value="1"/>
</dbReference>
<dbReference type="Gene3D" id="3.30.1360.120">
    <property type="entry name" value="Probable tRNA modification gtpase trme, domain 1"/>
    <property type="match status" value="1"/>
</dbReference>
<dbReference type="Gene3D" id="1.20.120.430">
    <property type="entry name" value="tRNA modification GTPase MnmE domain 2"/>
    <property type="match status" value="1"/>
</dbReference>
<dbReference type="HAMAP" id="MF_00379">
    <property type="entry name" value="GTPase_MnmE"/>
    <property type="match status" value="1"/>
</dbReference>
<dbReference type="InterPro" id="IPR031168">
    <property type="entry name" value="G_TrmE"/>
</dbReference>
<dbReference type="InterPro" id="IPR006073">
    <property type="entry name" value="GTP-bd"/>
</dbReference>
<dbReference type="InterPro" id="IPR018948">
    <property type="entry name" value="GTP-bd_TrmE_N"/>
</dbReference>
<dbReference type="InterPro" id="IPR004520">
    <property type="entry name" value="GTPase_MnmE"/>
</dbReference>
<dbReference type="InterPro" id="IPR027368">
    <property type="entry name" value="MnmE_dom2"/>
</dbReference>
<dbReference type="InterPro" id="IPR025867">
    <property type="entry name" value="MnmE_helical"/>
</dbReference>
<dbReference type="InterPro" id="IPR027417">
    <property type="entry name" value="P-loop_NTPase"/>
</dbReference>
<dbReference type="InterPro" id="IPR005225">
    <property type="entry name" value="Small_GTP-bd"/>
</dbReference>
<dbReference type="InterPro" id="IPR027266">
    <property type="entry name" value="TrmE/GcvT_dom1"/>
</dbReference>
<dbReference type="NCBIfam" id="TIGR00450">
    <property type="entry name" value="mnmE_trmE_thdF"/>
    <property type="match status" value="1"/>
</dbReference>
<dbReference type="NCBIfam" id="NF003661">
    <property type="entry name" value="PRK05291.1-3"/>
    <property type="match status" value="1"/>
</dbReference>
<dbReference type="NCBIfam" id="TIGR00231">
    <property type="entry name" value="small_GTP"/>
    <property type="match status" value="1"/>
</dbReference>
<dbReference type="PANTHER" id="PTHR42714">
    <property type="entry name" value="TRNA MODIFICATION GTPASE GTPBP3"/>
    <property type="match status" value="1"/>
</dbReference>
<dbReference type="PANTHER" id="PTHR42714:SF2">
    <property type="entry name" value="TRNA MODIFICATION GTPASE GTPBP3, MITOCHONDRIAL"/>
    <property type="match status" value="1"/>
</dbReference>
<dbReference type="Pfam" id="PF01926">
    <property type="entry name" value="MMR_HSR1"/>
    <property type="match status" value="1"/>
</dbReference>
<dbReference type="Pfam" id="PF12631">
    <property type="entry name" value="MnmE_helical"/>
    <property type="match status" value="1"/>
</dbReference>
<dbReference type="Pfam" id="PF10396">
    <property type="entry name" value="TrmE_N"/>
    <property type="match status" value="1"/>
</dbReference>
<dbReference type="PRINTS" id="PR00326">
    <property type="entry name" value="GTP1OBG"/>
</dbReference>
<dbReference type="SUPFAM" id="SSF52540">
    <property type="entry name" value="P-loop containing nucleoside triphosphate hydrolases"/>
    <property type="match status" value="1"/>
</dbReference>
<dbReference type="SUPFAM" id="SSF116878">
    <property type="entry name" value="TrmE connector domain"/>
    <property type="match status" value="1"/>
</dbReference>
<dbReference type="PROSITE" id="PS51709">
    <property type="entry name" value="G_TRME"/>
    <property type="match status" value="1"/>
</dbReference>
<reference key="1">
    <citation type="submission" date="2006-08" db="EMBL/GenBank/DDBJ databases">
        <title>Complete sequence of chromosome 1 of Burkholderia cenocepacia HI2424.</title>
        <authorList>
            <person name="Copeland A."/>
            <person name="Lucas S."/>
            <person name="Lapidus A."/>
            <person name="Barry K."/>
            <person name="Detter J.C."/>
            <person name="Glavina del Rio T."/>
            <person name="Hammon N."/>
            <person name="Israni S."/>
            <person name="Pitluck S."/>
            <person name="Chain P."/>
            <person name="Malfatti S."/>
            <person name="Shin M."/>
            <person name="Vergez L."/>
            <person name="Schmutz J."/>
            <person name="Larimer F."/>
            <person name="Land M."/>
            <person name="Hauser L."/>
            <person name="Kyrpides N."/>
            <person name="Kim E."/>
            <person name="LiPuma J.J."/>
            <person name="Gonzalez C.F."/>
            <person name="Konstantinidis K."/>
            <person name="Tiedje J.M."/>
            <person name="Richardson P."/>
        </authorList>
    </citation>
    <scope>NUCLEOTIDE SEQUENCE [LARGE SCALE GENOMIC DNA]</scope>
    <source>
        <strain>HI2424</strain>
    </source>
</reference>